<gene>
    <name type="primary">spn5</name>
    <name type="synonym">mde9</name>
    <name type="synonym">meu28</name>
    <name type="ORF">SPAC24C9.15c</name>
</gene>
<evidence type="ECO:0000250" key="1"/>
<evidence type="ECO:0000255" key="2"/>
<evidence type="ECO:0000255" key="3">
    <source>
        <dbReference type="PROSITE-ProRule" id="PRU01056"/>
    </source>
</evidence>
<evidence type="ECO:0000256" key="4">
    <source>
        <dbReference type="SAM" id="MobiDB-lite"/>
    </source>
</evidence>
<evidence type="ECO:0000269" key="5">
    <source>
    </source>
</evidence>
<evidence type="ECO:0000269" key="6">
    <source>
    </source>
</evidence>
<feature type="chain" id="PRO_0000173507" description="Septin homolog spn5">
    <location>
        <begin position="1"/>
        <end position="464"/>
    </location>
</feature>
<feature type="domain" description="Septin-type G" evidence="3">
    <location>
        <begin position="115"/>
        <end position="370"/>
    </location>
</feature>
<feature type="region of interest" description="Disordered" evidence="4">
    <location>
        <begin position="28"/>
        <end position="91"/>
    </location>
</feature>
<feature type="region of interest" description="G1 motif" evidence="3">
    <location>
        <begin position="125"/>
        <end position="132"/>
    </location>
</feature>
<feature type="region of interest" description="G3 motif" evidence="3">
    <location>
        <begin position="174"/>
        <end position="177"/>
    </location>
</feature>
<feature type="region of interest" description="G4 motif" evidence="3">
    <location>
        <begin position="256"/>
        <end position="259"/>
    </location>
</feature>
<feature type="coiled-coil region" evidence="2">
    <location>
        <begin position="396"/>
        <end position="453"/>
    </location>
</feature>
<feature type="compositionally biased region" description="Basic and acidic residues" evidence="4">
    <location>
        <begin position="41"/>
        <end position="54"/>
    </location>
</feature>
<feature type="compositionally biased region" description="Basic and acidic residues" evidence="4">
    <location>
        <begin position="69"/>
        <end position="81"/>
    </location>
</feature>
<feature type="binding site" evidence="1">
    <location>
        <begin position="125"/>
        <end position="132"/>
    </location>
    <ligand>
        <name>GTP</name>
        <dbReference type="ChEBI" id="CHEBI:37565"/>
    </ligand>
</feature>
<feature type="binding site" evidence="1">
    <location>
        <position position="151"/>
    </location>
    <ligand>
        <name>GTP</name>
        <dbReference type="ChEBI" id="CHEBI:37565"/>
    </ligand>
</feature>
<feature type="binding site" evidence="1">
    <location>
        <position position="177"/>
    </location>
    <ligand>
        <name>GTP</name>
        <dbReference type="ChEBI" id="CHEBI:37565"/>
    </ligand>
</feature>
<feature type="binding site" evidence="1">
    <location>
        <begin position="257"/>
        <end position="265"/>
    </location>
    <ligand>
        <name>GTP</name>
        <dbReference type="ChEBI" id="CHEBI:37565"/>
    </ligand>
</feature>
<feature type="binding site" evidence="1">
    <location>
        <position position="304"/>
    </location>
    <ligand>
        <name>GTP</name>
        <dbReference type="ChEBI" id="CHEBI:37565"/>
    </ligand>
</feature>
<feature type="binding site" evidence="1">
    <location>
        <position position="319"/>
    </location>
    <ligand>
        <name>GTP</name>
        <dbReference type="ChEBI" id="CHEBI:37565"/>
    </ligand>
</feature>
<keyword id="KW-0175">Coiled coil</keyword>
<keyword id="KW-0342">GTP-binding</keyword>
<keyword id="KW-0469">Meiosis</keyword>
<keyword id="KW-0472">Membrane</keyword>
<keyword id="KW-0547">Nucleotide-binding</keyword>
<keyword id="KW-0539">Nucleus</keyword>
<keyword id="KW-1185">Reference proteome</keyword>
<keyword id="KW-0749">Sporulation</keyword>
<dbReference type="EMBL" id="U29891">
    <property type="protein sequence ID" value="AAB53688.2"/>
    <property type="molecule type" value="Genomic_DNA"/>
</dbReference>
<dbReference type="EMBL" id="CU329670">
    <property type="protein sequence ID" value="CAB11273.1"/>
    <property type="molecule type" value="Genomic_DNA"/>
</dbReference>
<dbReference type="EMBL" id="AB054312">
    <property type="protein sequence ID" value="BAB60879.1"/>
    <property type="molecule type" value="mRNA"/>
</dbReference>
<dbReference type="PIR" id="T38356">
    <property type="entry name" value="T38356"/>
</dbReference>
<dbReference type="RefSeq" id="NP_594040.1">
    <property type="nucleotide sequence ID" value="NM_001019465.2"/>
</dbReference>
<dbReference type="SMR" id="P48010"/>
<dbReference type="BioGRID" id="279095">
    <property type="interactions" value="12"/>
</dbReference>
<dbReference type="FunCoup" id="P48010">
    <property type="interactions" value="6"/>
</dbReference>
<dbReference type="STRING" id="284812.P48010"/>
<dbReference type="PaxDb" id="4896-SPAC24C9.15c.1"/>
<dbReference type="EnsemblFungi" id="SPAC24C9.15c.1">
    <property type="protein sequence ID" value="SPAC24C9.15c.1:pep"/>
    <property type="gene ID" value="SPAC24C9.15c"/>
</dbReference>
<dbReference type="GeneID" id="2542641"/>
<dbReference type="KEGG" id="spo:2542641"/>
<dbReference type="PomBase" id="SPAC24C9.15c">
    <property type="gene designation" value="spn5"/>
</dbReference>
<dbReference type="VEuPathDB" id="FungiDB:SPAC24C9.15c"/>
<dbReference type="eggNOG" id="KOG2655">
    <property type="taxonomic scope" value="Eukaryota"/>
</dbReference>
<dbReference type="HOGENOM" id="CLU_017718_8_0_1"/>
<dbReference type="InParanoid" id="P48010"/>
<dbReference type="OMA" id="NPNGHRL"/>
<dbReference type="PhylomeDB" id="P48010"/>
<dbReference type="PRO" id="PR:P48010"/>
<dbReference type="Proteomes" id="UP000002485">
    <property type="component" value="Chromosome I"/>
</dbReference>
<dbReference type="GO" id="GO:0032153">
    <property type="term" value="C:cell division site"/>
    <property type="evidence" value="ECO:0000318"/>
    <property type="project" value="GO_Central"/>
</dbReference>
<dbReference type="GO" id="GO:0032175">
    <property type="term" value="C:mating projection septin ring"/>
    <property type="evidence" value="ECO:0000314"/>
    <property type="project" value="PomBase"/>
</dbReference>
<dbReference type="GO" id="GO:0032152">
    <property type="term" value="C:meiotic septin complex"/>
    <property type="evidence" value="ECO:0000314"/>
    <property type="project" value="PomBase"/>
</dbReference>
<dbReference type="GO" id="GO:0016020">
    <property type="term" value="C:membrane"/>
    <property type="evidence" value="ECO:0007669"/>
    <property type="project" value="UniProtKB-KW"/>
</dbReference>
<dbReference type="GO" id="GO:0015630">
    <property type="term" value="C:microtubule cytoskeleton"/>
    <property type="evidence" value="ECO:0000318"/>
    <property type="project" value="GO_Central"/>
</dbReference>
<dbReference type="GO" id="GO:0005634">
    <property type="term" value="C:nucleus"/>
    <property type="evidence" value="ECO:0007005"/>
    <property type="project" value="PomBase"/>
</dbReference>
<dbReference type="GO" id="GO:0032169">
    <property type="term" value="C:prospore septin ring"/>
    <property type="evidence" value="ECO:0000314"/>
    <property type="project" value="PomBase"/>
</dbReference>
<dbReference type="GO" id="GO:0031105">
    <property type="term" value="C:septin complex"/>
    <property type="evidence" value="ECO:0000318"/>
    <property type="project" value="GO_Central"/>
</dbReference>
<dbReference type="GO" id="GO:0005940">
    <property type="term" value="C:septin ring"/>
    <property type="evidence" value="ECO:0000318"/>
    <property type="project" value="GO_Central"/>
</dbReference>
<dbReference type="GO" id="GO:0005525">
    <property type="term" value="F:GTP binding"/>
    <property type="evidence" value="ECO:0000255"/>
    <property type="project" value="PomBase"/>
</dbReference>
<dbReference type="GO" id="GO:0003924">
    <property type="term" value="F:GTPase activity"/>
    <property type="evidence" value="ECO:0000318"/>
    <property type="project" value="GO_Central"/>
</dbReference>
<dbReference type="GO" id="GO:0060090">
    <property type="term" value="F:molecular adaptor activity"/>
    <property type="evidence" value="ECO:0000318"/>
    <property type="project" value="GO_Central"/>
</dbReference>
<dbReference type="GO" id="GO:0070273">
    <property type="term" value="F:phosphatidylinositol-4-phosphate binding"/>
    <property type="evidence" value="ECO:0000314"/>
    <property type="project" value="PomBase"/>
</dbReference>
<dbReference type="GO" id="GO:0061640">
    <property type="term" value="P:cytoskeleton-dependent cytokinesis"/>
    <property type="evidence" value="ECO:0000318"/>
    <property type="project" value="GO_Central"/>
</dbReference>
<dbReference type="GO" id="GO:0008104">
    <property type="term" value="P:protein localization"/>
    <property type="evidence" value="ECO:0000318"/>
    <property type="project" value="GO_Central"/>
</dbReference>
<dbReference type="GO" id="GO:0070583">
    <property type="term" value="P:spore membrane bending pathway"/>
    <property type="evidence" value="ECO:0000315"/>
    <property type="project" value="PomBase"/>
</dbReference>
<dbReference type="CDD" id="cd01850">
    <property type="entry name" value="CDC_Septin"/>
    <property type="match status" value="1"/>
</dbReference>
<dbReference type="Gene3D" id="3.40.50.300">
    <property type="entry name" value="P-loop containing nucleotide triphosphate hydrolases"/>
    <property type="match status" value="1"/>
</dbReference>
<dbReference type="InterPro" id="IPR030379">
    <property type="entry name" value="G_SEPTIN_dom"/>
</dbReference>
<dbReference type="InterPro" id="IPR027417">
    <property type="entry name" value="P-loop_NTPase"/>
</dbReference>
<dbReference type="InterPro" id="IPR016491">
    <property type="entry name" value="Septin"/>
</dbReference>
<dbReference type="PANTHER" id="PTHR18884">
    <property type="entry name" value="SEPTIN"/>
    <property type="match status" value="1"/>
</dbReference>
<dbReference type="Pfam" id="PF00735">
    <property type="entry name" value="Septin"/>
    <property type="match status" value="1"/>
</dbReference>
<dbReference type="PIRSF" id="PIRSF006698">
    <property type="entry name" value="Septin"/>
    <property type="match status" value="1"/>
</dbReference>
<dbReference type="SUPFAM" id="SSF52540">
    <property type="entry name" value="P-loop containing nucleoside triphosphate hydrolases"/>
    <property type="match status" value="1"/>
</dbReference>
<dbReference type="PROSITE" id="PS51719">
    <property type="entry name" value="G_SEPTIN"/>
    <property type="match status" value="1"/>
</dbReference>
<organism>
    <name type="scientific">Schizosaccharomyces pombe (strain 972 / ATCC 24843)</name>
    <name type="common">Fission yeast</name>
    <dbReference type="NCBI Taxonomy" id="284812"/>
    <lineage>
        <taxon>Eukaryota</taxon>
        <taxon>Fungi</taxon>
        <taxon>Dikarya</taxon>
        <taxon>Ascomycota</taxon>
        <taxon>Taphrinomycotina</taxon>
        <taxon>Schizosaccharomycetes</taxon>
        <taxon>Schizosaccharomycetales</taxon>
        <taxon>Schizosaccharomycetaceae</taxon>
        <taxon>Schizosaccharomyces</taxon>
    </lineage>
</organism>
<comment type="function">
    <text evidence="6">Septin-like protein involved in the correct orientation of forespore membrane extension during sporulation.</text>
</comment>
<comment type="subunit">
    <text evidence="6">Component of the sporulation-specific septin complex composed of at least spn2, spn5, spn6 and spn7.</text>
</comment>
<comment type="subcellular location">
    <subcellularLocation>
        <location>Nucleus</location>
    </subcellularLocation>
    <subcellularLocation>
        <location>Forespore membrane</location>
        <topology>Peripheral membrane protein</topology>
    </subcellularLocation>
    <text>The sporulation-specific septin complex associates to the forespore membrane and forms partial or complete ring-like structures that curl around each haploid nucleus.</text>
</comment>
<comment type="induction">
    <text evidence="5">Expressed during meiosis. Expression is under the control of the meiosis-specific transcription factor mei4.</text>
</comment>
<comment type="similarity">
    <text evidence="3">Belongs to the TRAFAC class TrmE-Era-EngA-EngB-Septin-like GTPase superfamily. Septin GTPase family.</text>
</comment>
<accession>P48010</accession>
<accession>O13975</accession>
<accession>Q96WR7</accession>
<protein>
    <recommendedName>
        <fullName>Septin homolog spn5</fullName>
    </recommendedName>
    <alternativeName>
        <fullName>Mei4-dependent protein 9</fullName>
    </alternativeName>
    <alternativeName>
        <fullName>Meiotic expression up-regulated protein 28</fullName>
    </alternativeName>
</protein>
<proteinExistence type="evidence at protein level"/>
<sequence>MDSSNLSSSMPQEGQLKLTEEAIITIKQVDESSAKRSVSNESRKSKDVTRKEQIASDQQGDDQCPQSDTAKDKKTEFKQDEVPNSNGKSIPTFHPCNNIGINDFNHQHYSRVCRNGIDINLIVVGESSLGKTTFVNSFLQSNDTNFRPKKTMDFVEHKATLSDGDQKFNLTIVDTPGFGDKSDNSNCWRPIATNLLHRLNAYFQNEVKMDRETSEIDSRIHGCLFFINPNGHRLQPLEIYIMKKIDQFVNIIPVIGKADTMTSDELNHFKKRVIADMVREKIRYFREPHNEKKAKIPIPFAIVGAGAPIEHDGKCIRGRAYPWGLVDIDDPKQSDFCQLRNFLLYTHIEGLKHKTHKLIYDTFRTEKLVALNATPGSQFISAEEMNQKYISEQTQLVEEALTKVMKEKYREKENNLELLETNLKTHHKDYKHALKKRITALEEEKNRLIKEIGPEKVKKAGILA</sequence>
<name>SPN5_SCHPO</name>
<reference key="1">
    <citation type="submission" date="1995-06" db="EMBL/GenBank/DDBJ databases">
        <authorList>
            <person name="Al-Awar O.S."/>
            <person name="Pugh T.A."/>
            <person name="Kim H.B."/>
            <person name="Valencik M.L."/>
            <person name="Pringle J.R."/>
        </authorList>
    </citation>
    <scope>NUCLEOTIDE SEQUENCE [GENOMIC DNA]</scope>
</reference>
<reference key="2">
    <citation type="submission" date="2001-09" db="EMBL/GenBank/DDBJ databases">
        <authorList>
            <person name="Al-Awar O.S."/>
        </authorList>
    </citation>
    <scope>SEQUENCE REVISION</scope>
</reference>
<reference key="3">
    <citation type="journal article" date="2002" name="Nature">
        <title>The genome sequence of Schizosaccharomyces pombe.</title>
        <authorList>
            <person name="Wood V."/>
            <person name="Gwilliam R."/>
            <person name="Rajandream M.A."/>
            <person name="Lyne M.H."/>
            <person name="Lyne R."/>
            <person name="Stewart A."/>
            <person name="Sgouros J.G."/>
            <person name="Peat N."/>
            <person name="Hayles J."/>
            <person name="Baker S.G."/>
            <person name="Basham D."/>
            <person name="Bowman S."/>
            <person name="Brooks K."/>
            <person name="Brown D."/>
            <person name="Brown S."/>
            <person name="Chillingworth T."/>
            <person name="Churcher C.M."/>
            <person name="Collins M."/>
            <person name="Connor R."/>
            <person name="Cronin A."/>
            <person name="Davis P."/>
            <person name="Feltwell T."/>
            <person name="Fraser A."/>
            <person name="Gentles S."/>
            <person name="Goble A."/>
            <person name="Hamlin N."/>
            <person name="Harris D.E."/>
            <person name="Hidalgo J."/>
            <person name="Hodgson G."/>
            <person name="Holroyd S."/>
            <person name="Hornsby T."/>
            <person name="Howarth S."/>
            <person name="Huckle E.J."/>
            <person name="Hunt S."/>
            <person name="Jagels K."/>
            <person name="James K.D."/>
            <person name="Jones L."/>
            <person name="Jones M."/>
            <person name="Leather S."/>
            <person name="McDonald S."/>
            <person name="McLean J."/>
            <person name="Mooney P."/>
            <person name="Moule S."/>
            <person name="Mungall K.L."/>
            <person name="Murphy L.D."/>
            <person name="Niblett D."/>
            <person name="Odell C."/>
            <person name="Oliver K."/>
            <person name="O'Neil S."/>
            <person name="Pearson D."/>
            <person name="Quail M.A."/>
            <person name="Rabbinowitsch E."/>
            <person name="Rutherford K.M."/>
            <person name="Rutter S."/>
            <person name="Saunders D."/>
            <person name="Seeger K."/>
            <person name="Sharp S."/>
            <person name="Skelton J."/>
            <person name="Simmonds M.N."/>
            <person name="Squares R."/>
            <person name="Squares S."/>
            <person name="Stevens K."/>
            <person name="Taylor K."/>
            <person name="Taylor R.G."/>
            <person name="Tivey A."/>
            <person name="Walsh S.V."/>
            <person name="Warren T."/>
            <person name="Whitehead S."/>
            <person name="Woodward J.R."/>
            <person name="Volckaert G."/>
            <person name="Aert R."/>
            <person name="Robben J."/>
            <person name="Grymonprez B."/>
            <person name="Weltjens I."/>
            <person name="Vanstreels E."/>
            <person name="Rieger M."/>
            <person name="Schaefer M."/>
            <person name="Mueller-Auer S."/>
            <person name="Gabel C."/>
            <person name="Fuchs M."/>
            <person name="Duesterhoeft A."/>
            <person name="Fritzc C."/>
            <person name="Holzer E."/>
            <person name="Moestl D."/>
            <person name="Hilbert H."/>
            <person name="Borzym K."/>
            <person name="Langer I."/>
            <person name="Beck A."/>
            <person name="Lehrach H."/>
            <person name="Reinhardt R."/>
            <person name="Pohl T.M."/>
            <person name="Eger P."/>
            <person name="Zimmermann W."/>
            <person name="Wedler H."/>
            <person name="Wambutt R."/>
            <person name="Purnelle B."/>
            <person name="Goffeau A."/>
            <person name="Cadieu E."/>
            <person name="Dreano S."/>
            <person name="Gloux S."/>
            <person name="Lelaure V."/>
            <person name="Mottier S."/>
            <person name="Galibert F."/>
            <person name="Aves S.J."/>
            <person name="Xiang Z."/>
            <person name="Hunt C."/>
            <person name="Moore K."/>
            <person name="Hurst S.M."/>
            <person name="Lucas M."/>
            <person name="Rochet M."/>
            <person name="Gaillardin C."/>
            <person name="Tallada V.A."/>
            <person name="Garzon A."/>
            <person name="Thode G."/>
            <person name="Daga R.R."/>
            <person name="Cruzado L."/>
            <person name="Jimenez J."/>
            <person name="Sanchez M."/>
            <person name="del Rey F."/>
            <person name="Benito J."/>
            <person name="Dominguez A."/>
            <person name="Revuelta J.L."/>
            <person name="Moreno S."/>
            <person name="Armstrong J."/>
            <person name="Forsburg S.L."/>
            <person name="Cerutti L."/>
            <person name="Lowe T."/>
            <person name="McCombie W.R."/>
            <person name="Paulsen I."/>
            <person name="Potashkin J."/>
            <person name="Shpakovski G.V."/>
            <person name="Ussery D."/>
            <person name="Barrell B.G."/>
            <person name="Nurse P."/>
        </authorList>
    </citation>
    <scope>NUCLEOTIDE SEQUENCE [LARGE SCALE GENOMIC DNA]</scope>
    <source>
        <strain>972 / ATCC 24843</strain>
    </source>
</reference>
<reference key="4">
    <citation type="journal article" date="2001" name="Nucleic Acids Res.">
        <title>Comprehensive isolation of meiosis-specific genes identifies novel proteins and unusual non-coding transcripts in Schizosaccharomyces pombe.</title>
        <authorList>
            <person name="Watanabe T."/>
            <person name="Miyashita K."/>
            <person name="Saito T.T."/>
            <person name="Yoneki T."/>
            <person name="Kakihara Y."/>
            <person name="Nabeshima K."/>
            <person name="Kishi Y.A."/>
            <person name="Shimoda C."/>
            <person name="Nojima H."/>
        </authorList>
    </citation>
    <scope>NUCLEOTIDE SEQUENCE [MRNA] OF 295-464</scope>
    <source>
        <strain>CD16-1</strain>
    </source>
</reference>
<reference key="5">
    <citation type="journal article" date="2000" name="Genetics">
        <title>Autoregulated expression of Schizosaccharomyces pombe meiosis-specific transcription factor Mei4 and a genome-wide search for its target genes.</title>
        <authorList>
            <person name="Abe H."/>
            <person name="Shimoda C."/>
        </authorList>
    </citation>
    <scope>INDUCTION</scope>
</reference>
<reference key="6">
    <citation type="journal article" date="2006" name="Nat. Biotechnol.">
        <title>ORFeome cloning and global analysis of protein localization in the fission yeast Schizosaccharomyces pombe.</title>
        <authorList>
            <person name="Matsuyama A."/>
            <person name="Arai R."/>
            <person name="Yashiroda Y."/>
            <person name="Shirai A."/>
            <person name="Kamata A."/>
            <person name="Sekido S."/>
            <person name="Kobayashi Y."/>
            <person name="Hashimoto A."/>
            <person name="Hamamoto M."/>
            <person name="Hiraoka Y."/>
            <person name="Horinouchi S."/>
            <person name="Yoshida M."/>
        </authorList>
    </citation>
    <scope>SUBCELLULAR LOCATION [LARGE SCALE ANALYSIS]</scope>
</reference>
<reference key="7">
    <citation type="journal article" date="2010" name="Mol. Cell. Biol.">
        <title>Role of septins in the orientation of forespore membrane extension during sporulation in fission yeast.</title>
        <authorList>
            <person name="Onishi M."/>
            <person name="Koga T."/>
            <person name="Hirata A."/>
            <person name="Nakamura T."/>
            <person name="Asakawa H."/>
            <person name="Shimoda C."/>
            <person name="Bahler J."/>
            <person name="Wu J.Q."/>
            <person name="Takegawa K."/>
            <person name="Tachikawa H."/>
            <person name="Pringle J.R."/>
            <person name="Fukui Y."/>
        </authorList>
    </citation>
    <scope>FUNCTION</scope>
    <scope>SUBCELLULAR LOCATION</scope>
    <scope>IDENTIFICATION IN THE SPORULATION-SPECIFIC SEPTIN COMPLEX</scope>
</reference>